<comment type="function">
    <text evidence="7">Functions as a ubiquitin E3 ligase. Acts as a coactivator of androgen receptor (AR) depending on its ubiquitin ligase activity.</text>
</comment>
<comment type="catalytic activity">
    <reaction>
        <text>S-ubiquitinyl-[E2 ubiquitin-conjugating enzyme]-L-cysteine + [acceptor protein]-L-lysine = [E2 ubiquitin-conjugating enzyme]-L-cysteine + N(6)-ubiquitinyl-[acceptor protein]-L-lysine.</text>
        <dbReference type="EC" id="2.3.2.27"/>
    </reaction>
</comment>
<comment type="pathway">
    <text>Protein modification; protein ubiquitination.</text>
</comment>
<comment type="subunit">
    <text evidence="7">Interacts with AR/androgen receptor (via ligand-binding domain). Interacts with KAT5/TIP60.</text>
</comment>
<comment type="interaction">
    <interactant intactId="EBI-2130449">
        <id>Q6AZZ1</id>
    </interactant>
    <interactant intactId="EBI-10693257">
        <id>Q9H7T9</id>
        <label>AUNIP</label>
    </interactant>
    <organismsDiffer>false</organismsDiffer>
    <experiments>2</experiments>
</comment>
<comment type="interaction">
    <interactant intactId="EBI-2130449">
        <id>Q6AZZ1</id>
    </interactant>
    <interactant intactId="EBI-10191951">
        <id>O95561</id>
        <label>C1orf105</label>
    </interactant>
    <organismsDiffer>false</organismsDiffer>
    <experiments>2</experiments>
</comment>
<comment type="interaction">
    <interactant intactId="EBI-2130449">
        <id>Q6AZZ1</id>
    </interactant>
    <interactant intactId="EBI-11988027">
        <id>Q9NRI5-2</id>
        <label>DISC1</label>
    </interactant>
    <organismsDiffer>false</organismsDiffer>
    <experiments>3</experiments>
</comment>
<comment type="interaction">
    <interactant intactId="EBI-2130449">
        <id>Q6AZZ1</id>
    </interactant>
    <interactant intactId="EBI-6509505">
        <id>Q0VD86</id>
        <label>INCA1</label>
    </interactant>
    <organismsDiffer>false</organismsDiffer>
    <experiments>3</experiments>
</comment>
<comment type="interaction">
    <interactant intactId="EBI-2130449">
        <id>Q6AZZ1</id>
    </interactant>
    <interactant intactId="EBI-11953846">
        <id>Q52LG2</id>
        <label>KRTAP13-2</label>
    </interactant>
    <organismsDiffer>false</organismsDiffer>
    <experiments>3</experiments>
</comment>
<comment type="interaction">
    <interactant intactId="EBI-2130449">
        <id>Q6AZZ1</id>
    </interactant>
    <interactant intactId="EBI-10241252">
        <id>Q3SY46</id>
        <label>KRTAP13-3</label>
    </interactant>
    <organismsDiffer>false</organismsDiffer>
    <experiments>3</experiments>
</comment>
<comment type="interaction">
    <interactant intactId="EBI-2130449">
        <id>Q6AZZ1</id>
    </interactant>
    <interactant intactId="EBI-739832">
        <id>Q8TBB1</id>
        <label>LNX1</label>
    </interactant>
    <organismsDiffer>false</organismsDiffer>
    <experiments>3</experiments>
</comment>
<comment type="interaction">
    <interactant intactId="EBI-2130449">
        <id>Q6AZZ1</id>
    </interactant>
    <interactant intactId="EBI-2824799">
        <id>Q9NQ48</id>
        <label>LZTFL1</label>
    </interactant>
    <organismsDiffer>false</organismsDiffer>
    <experiments>3</experiments>
</comment>
<comment type="interaction">
    <interactant intactId="EBI-2130449">
        <id>Q6AZZ1</id>
    </interactant>
    <interactant intactId="EBI-20858485">
        <id>Q9H239</id>
        <label>MMP28</label>
    </interactant>
    <organismsDiffer>false</organismsDiffer>
    <experiments>3</experiments>
</comment>
<comment type="interaction">
    <interactant intactId="EBI-2130449">
        <id>Q6AZZ1</id>
    </interactant>
    <interactant intactId="EBI-3907456">
        <id>P34130</id>
        <label>NTF4</label>
    </interactant>
    <organismsDiffer>false</organismsDiffer>
    <experiments>2</experiments>
</comment>
<comment type="interaction">
    <interactant intactId="EBI-2130449">
        <id>Q6AZZ1</id>
    </interactant>
    <interactant intactId="EBI-2949792">
        <id>Q9BRJ7</id>
        <label>NUDT16L1</label>
    </interactant>
    <organismsDiffer>false</organismsDiffer>
    <experiments>3</experiments>
</comment>
<comment type="interaction">
    <interactant intactId="EBI-2130449">
        <id>Q6AZZ1</id>
    </interactant>
    <interactant intactId="EBI-347928">
        <id>P62487</id>
        <label>POLR2G</label>
    </interactant>
    <organismsDiffer>false</organismsDiffer>
    <experiments>3</experiments>
</comment>
<comment type="interaction">
    <interactant intactId="EBI-2130449">
        <id>Q6AZZ1</id>
    </interactant>
    <interactant intactId="EBI-21891692">
        <id>Q7RTY5</id>
        <label>PRSS48</label>
    </interactant>
    <organismsDiffer>false</organismsDiffer>
    <experiments>2</experiments>
</comment>
<comment type="interaction">
    <interactant intactId="EBI-2130449">
        <id>Q6AZZ1</id>
    </interactant>
    <interactant intactId="EBI-10829018">
        <id>Q04864-2</id>
        <label>REL</label>
    </interactant>
    <organismsDiffer>false</organismsDiffer>
    <experiments>3</experiments>
</comment>
<comment type="interaction">
    <interactant intactId="EBI-2130449">
        <id>Q6AZZ1</id>
    </interactant>
    <interactant intactId="EBI-13636688">
        <id>P15884-3</id>
        <label>TCF4</label>
    </interactant>
    <organismsDiffer>false</organismsDiffer>
    <experiments>3</experiments>
</comment>
<comment type="interaction">
    <interactant intactId="EBI-2130449">
        <id>Q6AZZ1</id>
    </interactant>
    <interactant intactId="EBI-11139477">
        <id>Q96N21</id>
        <label>TEPSIN</label>
    </interactant>
    <organismsDiffer>false</organismsDiffer>
    <experiments>3</experiments>
</comment>
<comment type="interaction">
    <interactant intactId="EBI-2130449">
        <id>Q6AZZ1</id>
    </interactant>
    <interactant intactId="EBI-2130449">
        <id>Q6AZZ1</id>
        <label>TRIM68</label>
    </interactant>
    <organismsDiffer>false</organismsDiffer>
    <experiments>3</experiments>
</comment>
<comment type="interaction">
    <interactant intactId="EBI-2130449">
        <id>Q6AZZ1</id>
    </interactant>
    <interactant intactId="EBI-356498">
        <id>P62258</id>
        <label>YWHAE</label>
    </interactant>
    <organismsDiffer>false</organismsDiffer>
    <experiments>2</experiments>
</comment>
<comment type="interaction">
    <interactant intactId="EBI-2130449">
        <id>Q6AZZ1</id>
    </interactant>
    <interactant intactId="EBI-12287587">
        <id>B2RXF5</id>
        <label>ZBTB42</label>
    </interactant>
    <organismsDiffer>false</organismsDiffer>
    <experiments>3</experiments>
</comment>
<comment type="subcellular location">
    <subcellularLocation>
        <location>Cytoplasm</location>
        <location>Perinuclear region</location>
    </subcellularLocation>
    <subcellularLocation>
        <location>Nucleus</location>
    </subcellularLocation>
    <text>Colocalized with AR in nucleus.</text>
</comment>
<comment type="alternative products">
    <event type="alternative splicing"/>
    <isoform>
        <id>Q6AZZ1-1</id>
        <name>1</name>
        <sequence type="displayed"/>
    </isoform>
    <isoform>
        <id>Q6AZZ1-2</id>
        <name>2</name>
        <sequence type="described" ref="VSP_055444 VSP_055445"/>
    </isoform>
</comment>
<comment type="tissue specificity">
    <text evidence="5 6 7">Widely expressed. Expressed at high levels in prostate cancer cell lines. Up-regulation could be restricted to androgen-dependent cells.</text>
</comment>
<comment type="induction">
    <text>Up-regulated in prostate cancer.</text>
</comment>
<comment type="domain">
    <text evidence="7">The RING domain is essential for ubiquitin E3 ligase activity.</text>
</comment>
<comment type="PTM">
    <text evidence="7">Auto-ubiquitinated.</text>
</comment>
<comment type="miscellaneous">
    <text>Antibodies against TRIM68 are found in patients with systemic lupus erythematosus (SLE) and primary Sjoegren syndrome.</text>
</comment>
<comment type="similarity">
    <text evidence="9">Belongs to the TRIM/RBCC family.</text>
</comment>
<comment type="sequence caution" evidence="9">
    <conflict type="erroneous initiation">
        <sequence resource="EMBL-CDS" id="BAA91569"/>
    </conflict>
</comment>
<comment type="sequence caution" evidence="9">
    <conflict type="erroneous initiation">
        <sequence resource="EMBL-CDS" id="BAB14309"/>
    </conflict>
</comment>
<feature type="chain" id="PRO_0000249437" description="E3 ubiquitin-protein ligase TRIM68">
    <location>
        <begin position="1"/>
        <end position="485"/>
    </location>
</feature>
<feature type="domain" description="B30.2/SPRY" evidence="4">
    <location>
        <begin position="285"/>
        <end position="481"/>
    </location>
</feature>
<feature type="zinc finger region" description="RING-type" evidence="3">
    <location>
        <begin position="16"/>
        <end position="61"/>
    </location>
</feature>
<feature type="zinc finger region" description="B box-type" evidence="2">
    <location>
        <begin position="93"/>
        <end position="134"/>
    </location>
</feature>
<feature type="coiled-coil region" evidence="1">
    <location>
        <begin position="207"/>
        <end position="239"/>
    </location>
</feature>
<feature type="binding site" evidence="2">
    <location>
        <position position="98"/>
    </location>
    <ligand>
        <name>Zn(2+)</name>
        <dbReference type="ChEBI" id="CHEBI:29105"/>
    </ligand>
</feature>
<feature type="binding site" evidence="2">
    <location>
        <position position="101"/>
    </location>
    <ligand>
        <name>Zn(2+)</name>
        <dbReference type="ChEBI" id="CHEBI:29105"/>
    </ligand>
</feature>
<feature type="binding site" evidence="2">
    <location>
        <position position="120"/>
    </location>
    <ligand>
        <name>Zn(2+)</name>
        <dbReference type="ChEBI" id="CHEBI:29105"/>
    </ligand>
</feature>
<feature type="binding site" evidence="2">
    <location>
        <position position="126"/>
    </location>
    <ligand>
        <name>Zn(2+)</name>
        <dbReference type="ChEBI" id="CHEBI:29105"/>
    </ligand>
</feature>
<feature type="splice variant" id="VSP_055444" description="In isoform 2." evidence="8">
    <original>MDP</original>
    <variation>MQK</variation>
    <location>
        <begin position="1"/>
        <end position="3"/>
    </location>
</feature>
<feature type="splice variant" id="VSP_055445" description="In isoform 2." evidence="8">
    <location>
        <begin position="4"/>
        <end position="282"/>
    </location>
</feature>
<feature type="sequence variant" id="VAR_027415" description="In dbSNP:rs2231975." evidence="5">
    <original>C</original>
    <variation>Y</variation>
    <location>
        <position position="442"/>
    </location>
</feature>
<feature type="sequence variant" id="VAR_063007" description="In dbSNP:rs2231976.">
    <original>R</original>
    <variation>H</variation>
    <location>
        <position position="457"/>
    </location>
</feature>
<feature type="sequence variant" id="VAR_063008" description="In dbSNP:rs7109316.">
    <original>Y</original>
    <variation>S</variation>
    <location>
        <position position="466"/>
    </location>
</feature>
<feature type="sequence conflict" description="In Ref. 3; BAG51737." evidence="9" ref="3">
    <original>W</original>
    <variation>R</variation>
    <location>
        <position position="44"/>
    </location>
</feature>
<feature type="sequence conflict" description="In Ref. 7; AAF91075." evidence="9" ref="7">
    <original>CKEDVL</original>
    <variation>RGNSLQ</variation>
    <location>
        <begin position="109"/>
        <end position="114"/>
    </location>
</feature>
<feature type="sequence conflict" description="In Ref. 7; AAF91075." evidence="9" ref="7">
    <original>I</original>
    <variation>V</variation>
    <location>
        <position position="175"/>
    </location>
</feature>
<feature type="sequence conflict" description="In Ref. 2; AAL31641." evidence="9" ref="2">
    <original>A</original>
    <variation>G</variation>
    <location>
        <position position="303"/>
    </location>
</feature>
<feature type="sequence conflict" description="In Ref. 3; BAG62716." evidence="9" ref="3">
    <original>D</original>
    <variation>V</variation>
    <location>
        <position position="304"/>
    </location>
</feature>
<feature type="sequence conflict" description="In Ref. 3; BAB14309." evidence="9" ref="3">
    <original>S</original>
    <variation>P</variation>
    <location>
        <position position="314"/>
    </location>
</feature>
<feature type="sequence conflict" description="In Ref. 7; AAF91075." evidence="9" ref="7">
    <original>K</original>
    <variation>Y</variation>
    <location>
        <position position="376"/>
    </location>
</feature>
<feature type="sequence conflict" description="In Ref. 7; AAF91075." evidence="9" ref="7">
    <original>R</original>
    <variation>K</variation>
    <location>
        <position position="399"/>
    </location>
</feature>
<feature type="sequence conflict" description="In Ref. 7; AAF91075." evidence="9" ref="7">
    <original>Y</original>
    <variation>V</variation>
    <location>
        <position position="411"/>
    </location>
</feature>
<feature type="sequence conflict" description="In Ref. 7; AAF91075." evidence="9" ref="7">
    <original>R</original>
    <variation>P</variation>
    <location>
        <position position="422"/>
    </location>
</feature>
<name>TRI68_HUMAN</name>
<gene>
    <name type="primary">TRIM68</name>
    <name type="synonym">GC109</name>
    <name type="synonym">RNF137</name>
    <name type="synonym">SS56</name>
</gene>
<sequence length="485" mass="56259">MDPTALVEAIVEEVACPICMTFLREPMSIDCGHSFCHSCLSGLWEIPGESQNWGYTCPLCRAPVQPRNLRPNWQLANVVEKVRLLRLHPGMGLKGDLCERHGEKLKMFCKEDVLIMCEACSQSPEHEAHSVVPMEDVAWEYKWELHEALEHLKKEQEEAWKLEVGERKRTATWKIQVETRKQSIVWEFEKYQRLLEKKQPPHRQLGAEVAAALASLQREAAETMQKLELNHSELIQQSQVLWRMIAELKERSQRPVRWMLQDIQEVLNRSKSWSLQQPEPISLELKTDCRVLGLREILKTYAADVRLDPDTAYSRLIVSEDRKRVHYGDTNQKLPDNPERFYRYNIVLGSQCISSGRHYWEVEVGDRSEWGLGVCKQNVDRKEVVYLSPHYGFWVIRLRKGNEYRAGTDEYPILSLPVPPRRVGIFVDYEAHDISFYNVTDCGSHIFTFPRYPFPGRLLPYFSPCYSIGTNNTAPLAICSLDGED</sequence>
<accession>Q6AZZ1</accession>
<accession>A6NI19</accession>
<accession>A8K551</accession>
<accession>B3KPM5</accession>
<accession>B4DVK4</accession>
<accession>Q8WZ70</accession>
<accession>Q96LE5</accession>
<accession>Q96PF7</accession>
<accession>Q9H9C2</accession>
<accession>Q9NW18</accession>
<organism>
    <name type="scientific">Homo sapiens</name>
    <name type="common">Human</name>
    <dbReference type="NCBI Taxonomy" id="9606"/>
    <lineage>
        <taxon>Eukaryota</taxon>
        <taxon>Metazoa</taxon>
        <taxon>Chordata</taxon>
        <taxon>Craniata</taxon>
        <taxon>Vertebrata</taxon>
        <taxon>Euteleostomi</taxon>
        <taxon>Mammalia</taxon>
        <taxon>Eutheria</taxon>
        <taxon>Euarchontoglires</taxon>
        <taxon>Primates</taxon>
        <taxon>Haplorrhini</taxon>
        <taxon>Catarrhini</taxon>
        <taxon>Hominidae</taxon>
        <taxon>Homo</taxon>
    </lineage>
</organism>
<proteinExistence type="evidence at protein level"/>
<evidence type="ECO:0000255" key="1"/>
<evidence type="ECO:0000255" key="2">
    <source>
        <dbReference type="PROSITE-ProRule" id="PRU00024"/>
    </source>
</evidence>
<evidence type="ECO:0000255" key="3">
    <source>
        <dbReference type="PROSITE-ProRule" id="PRU00175"/>
    </source>
</evidence>
<evidence type="ECO:0000255" key="4">
    <source>
        <dbReference type="PROSITE-ProRule" id="PRU00548"/>
    </source>
</evidence>
<evidence type="ECO:0000269" key="5">
    <source>
    </source>
</evidence>
<evidence type="ECO:0000269" key="6">
    <source>
    </source>
</evidence>
<evidence type="ECO:0000269" key="7">
    <source>
    </source>
</evidence>
<evidence type="ECO:0000303" key="8">
    <source>
    </source>
</evidence>
<evidence type="ECO:0000305" key="9"/>
<keyword id="KW-0025">Alternative splicing</keyword>
<keyword id="KW-0175">Coiled coil</keyword>
<keyword id="KW-0963">Cytoplasm</keyword>
<keyword id="KW-0479">Metal-binding</keyword>
<keyword id="KW-0539">Nucleus</keyword>
<keyword id="KW-1267">Proteomics identification</keyword>
<keyword id="KW-1185">Reference proteome</keyword>
<keyword id="KW-0808">Transferase</keyword>
<keyword id="KW-0832">Ubl conjugation</keyword>
<keyword id="KW-0833">Ubl conjugation pathway</keyword>
<keyword id="KW-0862">Zinc</keyword>
<keyword id="KW-0863">Zinc-finger</keyword>
<protein>
    <recommendedName>
        <fullName>E3 ubiquitin-protein ligase TRIM68</fullName>
        <ecNumber>2.3.2.27</ecNumber>
    </recommendedName>
    <alternativeName>
        <fullName>RING finger protein 137</fullName>
    </alternativeName>
    <alternativeName>
        <fullName evidence="9">RING-type E3 ubiquitin transferase TRIM68</fullName>
    </alternativeName>
    <alternativeName>
        <fullName>SSA protein SS-56</fullName>
        <shortName>SS-56</shortName>
    </alternativeName>
    <alternativeName>
        <fullName>Tripartite motif-containing protein 68</fullName>
    </alternativeName>
</protein>
<reference key="1">
    <citation type="journal article" date="2001" name="J. Clin. Invest.">
        <title>SS-56, a novel cellular target of autoantibody responses in Sjogren syndrome and systemic lupus erythematosus.</title>
        <authorList>
            <person name="Billaut-Mulot O."/>
            <person name="Cocude C."/>
            <person name="Kolesnitchenko V."/>
            <person name="Truong M.-J."/>
            <person name="Chan E.K.L."/>
            <person name="Hachulla E."/>
            <person name="de La Tribonniere X."/>
            <person name="Capron A."/>
            <person name="Bahr G.M."/>
        </authorList>
    </citation>
    <scope>NUCLEOTIDE SEQUENCE [MRNA] (ISOFORM 1)</scope>
    <scope>TISSUE SPECIFICITY</scope>
    <scope>SUBCELLULAR LOCATION</scope>
    <scope>IDENTIFICATION AS AUTOANTIGEN IN AUTOIMMUNE DISEASES</scope>
    <scope>VARIANT TYR-442</scope>
</reference>
<reference key="2">
    <citation type="submission" date="2001-10" db="EMBL/GenBank/DDBJ databases">
        <title>Cloning and characterization of FLJ10369, a novel Ro/SSA1-related gene on human chromosome 11p15.5.</title>
        <authorList>
            <person name="Rhodes D.A."/>
            <person name="Allcock R.J.N."/>
            <person name="Trowsdale J."/>
        </authorList>
    </citation>
    <scope>NUCLEOTIDE SEQUENCE [MRNA] (ISOFORM 1)</scope>
</reference>
<reference key="3">
    <citation type="journal article" date="2004" name="Nat. Genet.">
        <title>Complete sequencing and characterization of 21,243 full-length human cDNAs.</title>
        <authorList>
            <person name="Ota T."/>
            <person name="Suzuki Y."/>
            <person name="Nishikawa T."/>
            <person name="Otsuki T."/>
            <person name="Sugiyama T."/>
            <person name="Irie R."/>
            <person name="Wakamatsu A."/>
            <person name="Hayashi K."/>
            <person name="Sato H."/>
            <person name="Nagai K."/>
            <person name="Kimura K."/>
            <person name="Makita H."/>
            <person name="Sekine M."/>
            <person name="Obayashi M."/>
            <person name="Nishi T."/>
            <person name="Shibahara T."/>
            <person name="Tanaka T."/>
            <person name="Ishii S."/>
            <person name="Yamamoto J."/>
            <person name="Saito K."/>
            <person name="Kawai Y."/>
            <person name="Isono Y."/>
            <person name="Nakamura Y."/>
            <person name="Nagahari K."/>
            <person name="Murakami K."/>
            <person name="Yasuda T."/>
            <person name="Iwayanagi T."/>
            <person name="Wagatsuma M."/>
            <person name="Shiratori A."/>
            <person name="Sudo H."/>
            <person name="Hosoiri T."/>
            <person name="Kaku Y."/>
            <person name="Kodaira H."/>
            <person name="Kondo H."/>
            <person name="Sugawara M."/>
            <person name="Takahashi M."/>
            <person name="Kanda K."/>
            <person name="Yokoi T."/>
            <person name="Furuya T."/>
            <person name="Kikkawa E."/>
            <person name="Omura Y."/>
            <person name="Abe K."/>
            <person name="Kamihara K."/>
            <person name="Katsuta N."/>
            <person name="Sato K."/>
            <person name="Tanikawa M."/>
            <person name="Yamazaki M."/>
            <person name="Ninomiya K."/>
            <person name="Ishibashi T."/>
            <person name="Yamashita H."/>
            <person name="Murakawa K."/>
            <person name="Fujimori K."/>
            <person name="Tanai H."/>
            <person name="Kimata M."/>
            <person name="Watanabe M."/>
            <person name="Hiraoka S."/>
            <person name="Chiba Y."/>
            <person name="Ishida S."/>
            <person name="Ono Y."/>
            <person name="Takiguchi S."/>
            <person name="Watanabe S."/>
            <person name="Yosida M."/>
            <person name="Hotuta T."/>
            <person name="Kusano J."/>
            <person name="Kanehori K."/>
            <person name="Takahashi-Fujii A."/>
            <person name="Hara H."/>
            <person name="Tanase T.-O."/>
            <person name="Nomura Y."/>
            <person name="Togiya S."/>
            <person name="Komai F."/>
            <person name="Hara R."/>
            <person name="Takeuchi K."/>
            <person name="Arita M."/>
            <person name="Imose N."/>
            <person name="Musashino K."/>
            <person name="Yuuki H."/>
            <person name="Oshima A."/>
            <person name="Sasaki N."/>
            <person name="Aotsuka S."/>
            <person name="Yoshikawa Y."/>
            <person name="Matsunawa H."/>
            <person name="Ichihara T."/>
            <person name="Shiohata N."/>
            <person name="Sano S."/>
            <person name="Moriya S."/>
            <person name="Momiyama H."/>
            <person name="Satoh N."/>
            <person name="Takami S."/>
            <person name="Terashima Y."/>
            <person name="Suzuki O."/>
            <person name="Nakagawa S."/>
            <person name="Senoh A."/>
            <person name="Mizoguchi H."/>
            <person name="Goto Y."/>
            <person name="Shimizu F."/>
            <person name="Wakebe H."/>
            <person name="Hishigaki H."/>
            <person name="Watanabe T."/>
            <person name="Sugiyama A."/>
            <person name="Takemoto M."/>
            <person name="Kawakami B."/>
            <person name="Yamazaki M."/>
            <person name="Watanabe K."/>
            <person name="Kumagai A."/>
            <person name="Itakura S."/>
            <person name="Fukuzumi Y."/>
            <person name="Fujimori Y."/>
            <person name="Komiyama M."/>
            <person name="Tashiro H."/>
            <person name="Tanigami A."/>
            <person name="Fujiwara T."/>
            <person name="Ono T."/>
            <person name="Yamada K."/>
            <person name="Fujii Y."/>
            <person name="Ozaki K."/>
            <person name="Hirao M."/>
            <person name="Ohmori Y."/>
            <person name="Kawabata A."/>
            <person name="Hikiji T."/>
            <person name="Kobatake N."/>
            <person name="Inagaki H."/>
            <person name="Ikema Y."/>
            <person name="Okamoto S."/>
            <person name="Okitani R."/>
            <person name="Kawakami T."/>
            <person name="Noguchi S."/>
            <person name="Itoh T."/>
            <person name="Shigeta K."/>
            <person name="Senba T."/>
            <person name="Matsumura K."/>
            <person name="Nakajima Y."/>
            <person name="Mizuno T."/>
            <person name="Morinaga M."/>
            <person name="Sasaki M."/>
            <person name="Togashi T."/>
            <person name="Oyama M."/>
            <person name="Hata H."/>
            <person name="Watanabe M."/>
            <person name="Komatsu T."/>
            <person name="Mizushima-Sugano J."/>
            <person name="Satoh T."/>
            <person name="Shirai Y."/>
            <person name="Takahashi Y."/>
            <person name="Nakagawa K."/>
            <person name="Okumura K."/>
            <person name="Nagase T."/>
            <person name="Nomura N."/>
            <person name="Kikuchi H."/>
            <person name="Masuho Y."/>
            <person name="Yamashita R."/>
            <person name="Nakai K."/>
            <person name="Yada T."/>
            <person name="Nakamura Y."/>
            <person name="Ohara O."/>
            <person name="Isogai T."/>
            <person name="Sugano S."/>
        </authorList>
    </citation>
    <scope>NUCLEOTIDE SEQUENCE [LARGE SCALE MRNA] (ISOFORMS 1 AND 2)</scope>
    <source>
        <tissue>Spleen</tissue>
        <tissue>Teratocarcinoma</tissue>
    </source>
</reference>
<reference key="4">
    <citation type="journal article" date="2006" name="Nature">
        <title>Human chromosome 11 DNA sequence and analysis including novel gene identification.</title>
        <authorList>
            <person name="Taylor T.D."/>
            <person name="Noguchi H."/>
            <person name="Totoki Y."/>
            <person name="Toyoda A."/>
            <person name="Kuroki Y."/>
            <person name="Dewar K."/>
            <person name="Lloyd C."/>
            <person name="Itoh T."/>
            <person name="Takeda T."/>
            <person name="Kim D.-W."/>
            <person name="She X."/>
            <person name="Barlow K.F."/>
            <person name="Bloom T."/>
            <person name="Bruford E."/>
            <person name="Chang J.L."/>
            <person name="Cuomo C.A."/>
            <person name="Eichler E."/>
            <person name="FitzGerald M.G."/>
            <person name="Jaffe D.B."/>
            <person name="LaButti K."/>
            <person name="Nicol R."/>
            <person name="Park H.-S."/>
            <person name="Seaman C."/>
            <person name="Sougnez C."/>
            <person name="Yang X."/>
            <person name="Zimmer A.R."/>
            <person name="Zody M.C."/>
            <person name="Birren B.W."/>
            <person name="Nusbaum C."/>
            <person name="Fujiyama A."/>
            <person name="Hattori M."/>
            <person name="Rogers J."/>
            <person name="Lander E.S."/>
            <person name="Sakaki Y."/>
        </authorList>
    </citation>
    <scope>NUCLEOTIDE SEQUENCE [LARGE SCALE GENOMIC DNA]</scope>
</reference>
<reference key="5">
    <citation type="submission" date="2005-09" db="EMBL/GenBank/DDBJ databases">
        <authorList>
            <person name="Mural R.J."/>
            <person name="Istrail S."/>
            <person name="Sutton G.G."/>
            <person name="Florea L."/>
            <person name="Halpern A.L."/>
            <person name="Mobarry C.M."/>
            <person name="Lippert R."/>
            <person name="Walenz B."/>
            <person name="Shatkay H."/>
            <person name="Dew I."/>
            <person name="Miller J.R."/>
            <person name="Flanigan M.J."/>
            <person name="Edwards N.J."/>
            <person name="Bolanos R."/>
            <person name="Fasulo D."/>
            <person name="Halldorsson B.V."/>
            <person name="Hannenhalli S."/>
            <person name="Turner R."/>
            <person name="Yooseph S."/>
            <person name="Lu F."/>
            <person name="Nusskern D.R."/>
            <person name="Shue B.C."/>
            <person name="Zheng X.H."/>
            <person name="Zhong F."/>
            <person name="Delcher A.L."/>
            <person name="Huson D.H."/>
            <person name="Kravitz S.A."/>
            <person name="Mouchard L."/>
            <person name="Reinert K."/>
            <person name="Remington K.A."/>
            <person name="Clark A.G."/>
            <person name="Waterman M.S."/>
            <person name="Eichler E.E."/>
            <person name="Adams M.D."/>
            <person name="Hunkapiller M.W."/>
            <person name="Myers E.W."/>
            <person name="Venter J.C."/>
        </authorList>
    </citation>
    <scope>NUCLEOTIDE SEQUENCE [LARGE SCALE GENOMIC DNA]</scope>
</reference>
<reference key="6">
    <citation type="journal article" date="2004" name="Genome Res.">
        <title>The status, quality, and expansion of the NIH full-length cDNA project: the Mammalian Gene Collection (MGC).</title>
        <authorList>
            <consortium name="The MGC Project Team"/>
        </authorList>
    </citation>
    <scope>NUCLEOTIDE SEQUENCE [LARGE SCALE MRNA] (ISOFORM 1)</scope>
    <source>
        <tissue>Brain</tissue>
    </source>
</reference>
<reference key="7">
    <citation type="journal article" date="2001" name="Eur. J. Cancer">
        <title>A novel gene on human chromosome 2p24 is differentially expressed between androgen-dependent and androgen-independent prostate cancer cells.</title>
        <authorList>
            <person name="Chang G.T."/>
            <person name="Steenbeek M."/>
            <person name="Schippers E."/>
            <person name="Blok L.J."/>
            <person name="van Weerden W.M."/>
            <person name="van Alewijk D.C."/>
            <person name="Eussen B.H."/>
            <person name="van Steenbrugge G.J."/>
            <person name="Brinkmann A.O."/>
        </authorList>
    </citation>
    <scope>NUCLEOTIDE SEQUENCE [MRNA] OF 109-427 (ISOFORM 1)</scope>
    <scope>TISSUE SPECIFICITY</scope>
</reference>
<reference key="8">
    <citation type="journal article" date="2008" name="Cancer Res.">
        <title>TRIM68 regulates ligand-dependent transcription of androgen receptor in prostate cancer cells.</title>
        <authorList>
            <person name="Miyajima N."/>
            <person name="Maruyama S."/>
            <person name="Bohgaki M."/>
            <person name="Kano S."/>
            <person name="Shigemura M."/>
            <person name="Shinohara N."/>
            <person name="Nonomura K."/>
            <person name="Hatakeyama S."/>
        </authorList>
    </citation>
    <scope>FUNCTION</scope>
    <scope>TISSUE SPECIFICITY</scope>
    <scope>SUBCELLULAR LOCATION</scope>
    <scope>INTERACTION WITH KAT5 AND AR</scope>
    <scope>DOMAIN RING</scope>
    <scope>AUTOUBIQUITINATION</scope>
</reference>
<dbReference type="EC" id="2.3.2.27"/>
<dbReference type="EMBL" id="AF360739">
    <property type="protein sequence ID" value="AAL11501.1"/>
    <property type="molecule type" value="mRNA"/>
</dbReference>
<dbReference type="EMBL" id="AF439153">
    <property type="protein sequence ID" value="AAL31641.1"/>
    <property type="molecule type" value="mRNA"/>
</dbReference>
<dbReference type="EMBL" id="AK001231">
    <property type="protein sequence ID" value="BAA91569.1"/>
    <property type="status" value="ALT_INIT"/>
    <property type="molecule type" value="mRNA"/>
</dbReference>
<dbReference type="EMBL" id="AK022923">
    <property type="protein sequence ID" value="BAB14309.1"/>
    <property type="status" value="ALT_INIT"/>
    <property type="molecule type" value="mRNA"/>
</dbReference>
<dbReference type="EMBL" id="AK291166">
    <property type="protein sequence ID" value="BAF83855.1"/>
    <property type="molecule type" value="mRNA"/>
</dbReference>
<dbReference type="EMBL" id="AK301120">
    <property type="protein sequence ID" value="BAG62716.1"/>
    <property type="molecule type" value="mRNA"/>
</dbReference>
<dbReference type="EMBL" id="AK056523">
    <property type="protein sequence ID" value="BAG51737.1"/>
    <property type="molecule type" value="mRNA"/>
</dbReference>
<dbReference type="EMBL" id="AC090719">
    <property type="status" value="NOT_ANNOTATED_CDS"/>
    <property type="molecule type" value="Genomic_DNA"/>
</dbReference>
<dbReference type="EMBL" id="CH471064">
    <property type="protein sequence ID" value="EAW68835.1"/>
    <property type="molecule type" value="Genomic_DNA"/>
</dbReference>
<dbReference type="EMBL" id="BC075058">
    <property type="protein sequence ID" value="AAH75058.1"/>
    <property type="molecule type" value="mRNA"/>
</dbReference>
<dbReference type="EMBL" id="BC109063">
    <property type="protein sequence ID" value="AAI09064.1"/>
    <property type="molecule type" value="mRNA"/>
</dbReference>
<dbReference type="EMBL" id="AY005802">
    <property type="protein sequence ID" value="AAF91075.1"/>
    <property type="molecule type" value="mRNA"/>
</dbReference>
<dbReference type="CCDS" id="CCDS31356.1">
    <molecule id="Q6AZZ1-1"/>
</dbReference>
<dbReference type="RefSeq" id="NP_001291425.1">
    <property type="nucleotide sequence ID" value="NM_001304496.1"/>
</dbReference>
<dbReference type="RefSeq" id="NP_060543.5">
    <molecule id="Q6AZZ1-1"/>
    <property type="nucleotide sequence ID" value="NM_018073.7"/>
</dbReference>
<dbReference type="SMR" id="Q6AZZ1"/>
<dbReference type="BioGRID" id="120434">
    <property type="interactions" value="105"/>
</dbReference>
<dbReference type="FunCoup" id="Q6AZZ1">
    <property type="interactions" value="1843"/>
</dbReference>
<dbReference type="IntAct" id="Q6AZZ1">
    <property type="interactions" value="91"/>
</dbReference>
<dbReference type="MINT" id="Q6AZZ1"/>
<dbReference type="STRING" id="9606.ENSP00000300747"/>
<dbReference type="iPTMnet" id="Q6AZZ1"/>
<dbReference type="PhosphoSitePlus" id="Q6AZZ1"/>
<dbReference type="BioMuta" id="TRIM68"/>
<dbReference type="DMDM" id="74748376"/>
<dbReference type="jPOST" id="Q6AZZ1"/>
<dbReference type="MassIVE" id="Q6AZZ1"/>
<dbReference type="PaxDb" id="9606-ENSP00000300747"/>
<dbReference type="PeptideAtlas" id="Q6AZZ1"/>
<dbReference type="ProteomicsDB" id="66204">
    <molecule id="Q6AZZ1-1"/>
</dbReference>
<dbReference type="Antibodypedia" id="10892">
    <property type="antibodies" value="157 antibodies from 27 providers"/>
</dbReference>
<dbReference type="DNASU" id="55128"/>
<dbReference type="Ensembl" id="ENST00000300747.10">
    <molecule id="Q6AZZ1-1"/>
    <property type="protein sequence ID" value="ENSP00000300747.5"/>
    <property type="gene ID" value="ENSG00000167333.13"/>
</dbReference>
<dbReference type="GeneID" id="55128"/>
<dbReference type="KEGG" id="hsa:55128"/>
<dbReference type="MANE-Select" id="ENST00000300747.10">
    <property type="protein sequence ID" value="ENSP00000300747.5"/>
    <property type="RefSeq nucleotide sequence ID" value="NM_018073.8"/>
    <property type="RefSeq protein sequence ID" value="NP_060543.5"/>
</dbReference>
<dbReference type="UCSC" id="uc001lzf.2">
    <molecule id="Q6AZZ1-1"/>
    <property type="organism name" value="human"/>
</dbReference>
<dbReference type="AGR" id="HGNC:21161"/>
<dbReference type="CTD" id="55128"/>
<dbReference type="DisGeNET" id="55128"/>
<dbReference type="GeneCards" id="TRIM68"/>
<dbReference type="HGNC" id="HGNC:21161">
    <property type="gene designation" value="TRIM68"/>
</dbReference>
<dbReference type="HPA" id="ENSG00000167333">
    <property type="expression patterns" value="Low tissue specificity"/>
</dbReference>
<dbReference type="MIM" id="613184">
    <property type="type" value="gene"/>
</dbReference>
<dbReference type="neXtProt" id="NX_Q6AZZ1"/>
<dbReference type="OpenTargets" id="ENSG00000167333"/>
<dbReference type="PharmGKB" id="PA134939870"/>
<dbReference type="VEuPathDB" id="HostDB:ENSG00000167333"/>
<dbReference type="eggNOG" id="KOG2177">
    <property type="taxonomic scope" value="Eukaryota"/>
</dbReference>
<dbReference type="GeneTree" id="ENSGT00940000162047"/>
<dbReference type="HOGENOM" id="CLU_013137_0_3_1"/>
<dbReference type="InParanoid" id="Q6AZZ1"/>
<dbReference type="OMA" id="VAWDYKW"/>
<dbReference type="OrthoDB" id="128536at2759"/>
<dbReference type="PAN-GO" id="Q6AZZ1">
    <property type="GO annotations" value="13 GO annotations based on evolutionary models"/>
</dbReference>
<dbReference type="PhylomeDB" id="Q6AZZ1"/>
<dbReference type="TreeFam" id="TF338674"/>
<dbReference type="PathwayCommons" id="Q6AZZ1"/>
<dbReference type="Reactome" id="R-HSA-877300">
    <property type="pathway name" value="Interferon gamma signaling"/>
</dbReference>
<dbReference type="SignaLink" id="Q6AZZ1"/>
<dbReference type="SIGNOR" id="Q6AZZ1"/>
<dbReference type="UniPathway" id="UPA00143"/>
<dbReference type="BioGRID-ORCS" id="55128">
    <property type="hits" value="8 hits in 1198 CRISPR screens"/>
</dbReference>
<dbReference type="ChiTaRS" id="TRIM68">
    <property type="organism name" value="human"/>
</dbReference>
<dbReference type="GeneWiki" id="TRIM68"/>
<dbReference type="GenomeRNAi" id="55128"/>
<dbReference type="Pharos" id="Q6AZZ1">
    <property type="development level" value="Tbio"/>
</dbReference>
<dbReference type="PRO" id="PR:Q6AZZ1"/>
<dbReference type="Proteomes" id="UP000005640">
    <property type="component" value="Chromosome 11"/>
</dbReference>
<dbReference type="RNAct" id="Q6AZZ1">
    <property type="molecule type" value="protein"/>
</dbReference>
<dbReference type="Bgee" id="ENSG00000167333">
    <property type="expression patterns" value="Expressed in palpebral conjunctiva and 177 other cell types or tissues"/>
</dbReference>
<dbReference type="ExpressionAtlas" id="Q6AZZ1">
    <property type="expression patterns" value="baseline and differential"/>
</dbReference>
<dbReference type="GO" id="GO:0005737">
    <property type="term" value="C:cytoplasm"/>
    <property type="evidence" value="ECO:0000314"/>
    <property type="project" value="LIFEdb"/>
</dbReference>
<dbReference type="GO" id="GO:0005829">
    <property type="term" value="C:cytosol"/>
    <property type="evidence" value="ECO:0000314"/>
    <property type="project" value="HPA"/>
</dbReference>
<dbReference type="GO" id="GO:0005794">
    <property type="term" value="C:Golgi apparatus"/>
    <property type="evidence" value="ECO:0000314"/>
    <property type="project" value="HPA"/>
</dbReference>
<dbReference type="GO" id="GO:0005730">
    <property type="term" value="C:nucleolus"/>
    <property type="evidence" value="ECO:0000314"/>
    <property type="project" value="HPA"/>
</dbReference>
<dbReference type="GO" id="GO:0005654">
    <property type="term" value="C:nucleoplasm"/>
    <property type="evidence" value="ECO:0000314"/>
    <property type="project" value="HPA"/>
</dbReference>
<dbReference type="GO" id="GO:0005634">
    <property type="term" value="C:nucleus"/>
    <property type="evidence" value="ECO:0000314"/>
    <property type="project" value="UniProtKB"/>
</dbReference>
<dbReference type="GO" id="GO:0048471">
    <property type="term" value="C:perinuclear region of cytoplasm"/>
    <property type="evidence" value="ECO:0007669"/>
    <property type="project" value="UniProtKB-SubCell"/>
</dbReference>
<dbReference type="GO" id="GO:0035035">
    <property type="term" value="F:histone acetyltransferase binding"/>
    <property type="evidence" value="ECO:0000353"/>
    <property type="project" value="UniProtKB"/>
</dbReference>
<dbReference type="GO" id="GO:0042802">
    <property type="term" value="F:identical protein binding"/>
    <property type="evidence" value="ECO:0000353"/>
    <property type="project" value="IntAct"/>
</dbReference>
<dbReference type="GO" id="GO:0050681">
    <property type="term" value="F:nuclear androgen receptor binding"/>
    <property type="evidence" value="ECO:0000353"/>
    <property type="project" value="UniProtKB"/>
</dbReference>
<dbReference type="GO" id="GO:0061630">
    <property type="term" value="F:ubiquitin protein ligase activity"/>
    <property type="evidence" value="ECO:0000318"/>
    <property type="project" value="GO_Central"/>
</dbReference>
<dbReference type="GO" id="GO:0004842">
    <property type="term" value="F:ubiquitin-protein transferase activity"/>
    <property type="evidence" value="ECO:0000314"/>
    <property type="project" value="UniProtKB"/>
</dbReference>
<dbReference type="GO" id="GO:0008270">
    <property type="term" value="F:zinc ion binding"/>
    <property type="evidence" value="ECO:0007669"/>
    <property type="project" value="UniProtKB-KW"/>
</dbReference>
<dbReference type="GO" id="GO:0045087">
    <property type="term" value="P:innate immune response"/>
    <property type="evidence" value="ECO:0000318"/>
    <property type="project" value="GO_Central"/>
</dbReference>
<dbReference type="GO" id="GO:0051865">
    <property type="term" value="P:protein autoubiquitination"/>
    <property type="evidence" value="ECO:0000314"/>
    <property type="project" value="UniProtKB"/>
</dbReference>
<dbReference type="GO" id="GO:0060765">
    <property type="term" value="P:regulation of androgen receptor signaling pathway"/>
    <property type="evidence" value="ECO:0000314"/>
    <property type="project" value="UniProtKB"/>
</dbReference>
<dbReference type="GO" id="GO:0010468">
    <property type="term" value="P:regulation of gene expression"/>
    <property type="evidence" value="ECO:0000318"/>
    <property type="project" value="GO_Central"/>
</dbReference>
<dbReference type="CDD" id="cd19795">
    <property type="entry name" value="Bbox2_TRIM68_C-IV"/>
    <property type="match status" value="1"/>
</dbReference>
<dbReference type="CDD" id="cd16610">
    <property type="entry name" value="RING-HC_TRIM68_C-IV"/>
    <property type="match status" value="1"/>
</dbReference>
<dbReference type="CDD" id="cd13733">
    <property type="entry name" value="SPRY_PRY_C-I_1"/>
    <property type="match status" value="1"/>
</dbReference>
<dbReference type="FunFam" id="2.60.120.920:FF:000004">
    <property type="entry name" value="Butyrophilin subfamily 1 member A1"/>
    <property type="match status" value="1"/>
</dbReference>
<dbReference type="FunFam" id="3.30.160.60:FF:002023">
    <property type="entry name" value="E3 ubiquitin-protein ligase TRIM68"/>
    <property type="match status" value="1"/>
</dbReference>
<dbReference type="FunFam" id="3.30.40.10:FF:000248">
    <property type="entry name" value="E3 ubiquitin-protein ligase TRIM68"/>
    <property type="match status" value="1"/>
</dbReference>
<dbReference type="Gene3D" id="2.60.120.920">
    <property type="match status" value="1"/>
</dbReference>
<dbReference type="Gene3D" id="3.30.160.60">
    <property type="entry name" value="Classic Zinc Finger"/>
    <property type="match status" value="1"/>
</dbReference>
<dbReference type="Gene3D" id="3.30.40.10">
    <property type="entry name" value="Zinc/RING finger domain, C3HC4 (zinc finger)"/>
    <property type="match status" value="1"/>
</dbReference>
<dbReference type="InterPro" id="IPR001870">
    <property type="entry name" value="B30.2/SPRY"/>
</dbReference>
<dbReference type="InterPro" id="IPR043136">
    <property type="entry name" value="B30.2/SPRY_sf"/>
</dbReference>
<dbReference type="InterPro" id="IPR003879">
    <property type="entry name" value="Butyrophylin_SPRY"/>
</dbReference>
<dbReference type="InterPro" id="IPR013320">
    <property type="entry name" value="ConA-like_dom_sf"/>
</dbReference>
<dbReference type="InterPro" id="IPR006574">
    <property type="entry name" value="PRY"/>
</dbReference>
<dbReference type="InterPro" id="IPR003877">
    <property type="entry name" value="SPRY_dom"/>
</dbReference>
<dbReference type="InterPro" id="IPR050143">
    <property type="entry name" value="TRIM/RBCC"/>
</dbReference>
<dbReference type="InterPro" id="IPR042656">
    <property type="entry name" value="TRIM68_RING-HC"/>
</dbReference>
<dbReference type="InterPro" id="IPR000315">
    <property type="entry name" value="Znf_B-box"/>
</dbReference>
<dbReference type="InterPro" id="IPR001841">
    <property type="entry name" value="Znf_RING"/>
</dbReference>
<dbReference type="InterPro" id="IPR013083">
    <property type="entry name" value="Znf_RING/FYVE/PHD"/>
</dbReference>
<dbReference type="InterPro" id="IPR017907">
    <property type="entry name" value="Znf_RING_CS"/>
</dbReference>
<dbReference type="PANTHER" id="PTHR24103">
    <property type="entry name" value="E3 UBIQUITIN-PROTEIN LIGASE TRIM"/>
    <property type="match status" value="1"/>
</dbReference>
<dbReference type="Pfam" id="PF13765">
    <property type="entry name" value="PRY"/>
    <property type="match status" value="1"/>
</dbReference>
<dbReference type="Pfam" id="PF00622">
    <property type="entry name" value="SPRY"/>
    <property type="match status" value="1"/>
</dbReference>
<dbReference type="Pfam" id="PF00643">
    <property type="entry name" value="zf-B_box"/>
    <property type="match status" value="1"/>
</dbReference>
<dbReference type="Pfam" id="PF15227">
    <property type="entry name" value="zf-C3HC4_4"/>
    <property type="match status" value="1"/>
</dbReference>
<dbReference type="PRINTS" id="PR01407">
    <property type="entry name" value="BUTYPHLNCDUF"/>
</dbReference>
<dbReference type="SMART" id="SM00336">
    <property type="entry name" value="BBOX"/>
    <property type="match status" value="1"/>
</dbReference>
<dbReference type="SMART" id="SM00589">
    <property type="entry name" value="PRY"/>
    <property type="match status" value="1"/>
</dbReference>
<dbReference type="SMART" id="SM00184">
    <property type="entry name" value="RING"/>
    <property type="match status" value="1"/>
</dbReference>
<dbReference type="SMART" id="SM00449">
    <property type="entry name" value="SPRY"/>
    <property type="match status" value="1"/>
</dbReference>
<dbReference type="SUPFAM" id="SSF57845">
    <property type="entry name" value="B-box zinc-binding domain"/>
    <property type="match status" value="1"/>
</dbReference>
<dbReference type="SUPFAM" id="SSF49899">
    <property type="entry name" value="Concanavalin A-like lectins/glucanases"/>
    <property type="match status" value="1"/>
</dbReference>
<dbReference type="SUPFAM" id="SSF57850">
    <property type="entry name" value="RING/U-box"/>
    <property type="match status" value="1"/>
</dbReference>
<dbReference type="PROSITE" id="PS50188">
    <property type="entry name" value="B302_SPRY"/>
    <property type="match status" value="1"/>
</dbReference>
<dbReference type="PROSITE" id="PS50119">
    <property type="entry name" value="ZF_BBOX"/>
    <property type="match status" value="1"/>
</dbReference>
<dbReference type="PROSITE" id="PS00518">
    <property type="entry name" value="ZF_RING_1"/>
    <property type="match status" value="1"/>
</dbReference>
<dbReference type="PROSITE" id="PS50089">
    <property type="entry name" value="ZF_RING_2"/>
    <property type="match status" value="1"/>
</dbReference>